<gene>
    <name type="primary">riok-3</name>
    <name type="ORF">ZK632.3</name>
</gene>
<evidence type="ECO:0000250" key="1">
    <source>
        <dbReference type="UniProtKB" id="O14730"/>
    </source>
</evidence>
<evidence type="ECO:0000255" key="2">
    <source>
        <dbReference type="PROSITE-ProRule" id="PRU00159"/>
    </source>
</evidence>
<evidence type="ECO:0000256" key="3">
    <source>
        <dbReference type="SAM" id="MobiDB-lite"/>
    </source>
</evidence>
<evidence type="ECO:0000269" key="4">
    <source>
    </source>
</evidence>
<evidence type="ECO:0000305" key="5"/>
<accession>P34649</accession>
<reference key="1">
    <citation type="journal article" date="1994" name="Nature">
        <title>2.2 Mb of contiguous nucleotide sequence from chromosome III of C. elegans.</title>
        <authorList>
            <person name="Wilson R."/>
            <person name="Ainscough R."/>
            <person name="Anderson K."/>
            <person name="Baynes C."/>
            <person name="Berks M."/>
            <person name="Bonfield J."/>
            <person name="Burton J."/>
            <person name="Connell M."/>
            <person name="Copsey T."/>
            <person name="Cooper J."/>
            <person name="Coulson A."/>
            <person name="Craxton M."/>
            <person name="Dear S."/>
            <person name="Du Z."/>
            <person name="Durbin R."/>
            <person name="Favello A."/>
            <person name="Fraser A."/>
            <person name="Fulton L."/>
            <person name="Gardner A."/>
            <person name="Green P."/>
            <person name="Hawkins T."/>
            <person name="Hillier L."/>
            <person name="Jier M."/>
            <person name="Johnston L."/>
            <person name="Jones M."/>
            <person name="Kershaw J."/>
            <person name="Kirsten J."/>
            <person name="Laisster N."/>
            <person name="Latreille P."/>
            <person name="Lightning J."/>
            <person name="Lloyd C."/>
            <person name="Mortimore B."/>
            <person name="O'Callaghan M."/>
            <person name="Parsons J."/>
            <person name="Percy C."/>
            <person name="Rifken L."/>
            <person name="Roopra A."/>
            <person name="Saunders D."/>
            <person name="Shownkeen R."/>
            <person name="Sims M."/>
            <person name="Smaldon N."/>
            <person name="Smith A."/>
            <person name="Smith M."/>
            <person name="Sonnhammer E."/>
            <person name="Staden R."/>
            <person name="Sulston J."/>
            <person name="Thierry-Mieg J."/>
            <person name="Thomas K."/>
            <person name="Vaudin M."/>
            <person name="Vaughan K."/>
            <person name="Waterston R."/>
            <person name="Watson A."/>
            <person name="Weinstock L."/>
            <person name="Wilkinson-Sproat J."/>
            <person name="Wohldman P."/>
        </authorList>
    </citation>
    <scope>NUCLEOTIDE SEQUENCE [LARGE SCALE GENOMIC DNA]</scope>
    <source>
        <strain>Bristol N2</strain>
    </source>
</reference>
<reference key="2">
    <citation type="journal article" date="1998" name="Science">
        <title>Genome sequence of the nematode C. elegans: a platform for investigating biology.</title>
        <authorList>
            <consortium name="The C. elegans sequencing consortium"/>
        </authorList>
    </citation>
    <scope>NUCLEOTIDE SEQUENCE [LARGE SCALE GENOMIC DNA]</scope>
    <source>
        <strain>Bristol N2</strain>
    </source>
</reference>
<reference key="3">
    <citation type="journal article" date="2015" name="PLoS ONE">
        <title>Investigating the role of RIO protein kinases in Caenorhabditis elegans.</title>
        <authorList>
            <person name="Mendes T.K."/>
            <person name="Novakovic S."/>
            <person name="Raymant G."/>
            <person name="Bertram S.E."/>
            <person name="Esmaillie R."/>
            <person name="Nadarajan S."/>
            <person name="Breugelmans B."/>
            <person name="Hofmann A."/>
            <person name="Gasser R.B."/>
            <person name="Colaiacovo M.P."/>
            <person name="Boag P.R."/>
        </authorList>
    </citation>
    <scope>TISSUE SPECIFICITY</scope>
    <scope>DISRUPTION PHENOTYPE</scope>
</reference>
<protein>
    <recommendedName>
        <fullName evidence="1">Serine/threonine-protein kinase RIO3</fullName>
        <ecNumber evidence="5">2.7.11.1</ecNumber>
    </recommendedName>
</protein>
<sequence>MANCENNPWKKNAWGKNEETAEEPIVSFADVLSEEFIEDLSVQEKLEEERYMKQLDQMFGDTSVSDDQLPINTEGMTDEEVALALQRHFDREADVARAVGSSSSVHFTPDRYHPKTMQETDSENEDDDALRQAATDMLYAKLDEENATNSRLRPEGPSTSRTKHDTGVSGRRNADKTFNDRNTLPTGDMVGDKLNNKVFNKLMAFGKSESKRQMRNKDKEEKATMDTSVDSDTRLLLLKWINQGVFDSVDGIIATGKESAVLHAAQDSATSYAIKVYKTTLSEFKNRSEYVKDDFRFKNPRGVLKIWAEREFMNLSRMAKHGLPCPQPVKVRRNVLVMSFLGDQGLAAPRLKNVEWEFFTDDERRNVYDQVQSIMCRMYKECLLVHADLSEFNLLLTPDNKVHVIDVSQAMDLSHPRSLQFLTRDIQNIITFFTRIGTPNLPTYVQLFNLITDLDMVEDHDLLVQVEQFSEENRSVDLRHDKSRPADMELKKYNEEKKANRGISPAREYN</sequence>
<proteinExistence type="evidence at transcript level"/>
<keyword id="KW-0067">ATP-binding</keyword>
<keyword id="KW-0418">Kinase</keyword>
<keyword id="KW-0460">Magnesium</keyword>
<keyword id="KW-0479">Metal-binding</keyword>
<keyword id="KW-0547">Nucleotide-binding</keyword>
<keyword id="KW-1185">Reference proteome</keyword>
<keyword id="KW-0723">Serine/threonine-protein kinase</keyword>
<keyword id="KW-0808">Transferase</keyword>
<feature type="chain" id="PRO_0000213533" description="Serine/threonine-protein kinase RIO3">
    <location>
        <begin position="1"/>
        <end position="510"/>
    </location>
</feature>
<feature type="domain" description="Protein kinase" evidence="2">
    <location>
        <begin position="235"/>
        <end position="510"/>
    </location>
</feature>
<feature type="region of interest" description="Disordered" evidence="3">
    <location>
        <begin position="100"/>
        <end position="126"/>
    </location>
</feature>
<feature type="region of interest" description="Disordered" evidence="3">
    <location>
        <begin position="143"/>
        <end position="191"/>
    </location>
</feature>
<feature type="region of interest" description="Disordered" evidence="3">
    <location>
        <begin position="474"/>
        <end position="510"/>
    </location>
</feature>
<feature type="compositionally biased region" description="Basic and acidic residues" evidence="3">
    <location>
        <begin position="108"/>
        <end position="118"/>
    </location>
</feature>
<feature type="compositionally biased region" description="Basic and acidic residues" evidence="3">
    <location>
        <begin position="162"/>
        <end position="179"/>
    </location>
</feature>
<feature type="compositionally biased region" description="Basic and acidic residues" evidence="3">
    <location>
        <begin position="474"/>
        <end position="499"/>
    </location>
</feature>
<feature type="active site" description="Proton acceptor" evidence="2">
    <location>
        <position position="388"/>
    </location>
</feature>
<feature type="binding site" evidence="2">
    <location>
        <begin position="241"/>
        <end position="249"/>
    </location>
    <ligand>
        <name>ATP</name>
        <dbReference type="ChEBI" id="CHEBI:30616"/>
    </ligand>
</feature>
<feature type="binding site" evidence="2">
    <location>
        <position position="275"/>
    </location>
    <ligand>
        <name>ATP</name>
        <dbReference type="ChEBI" id="CHEBI:30616"/>
    </ligand>
</feature>
<organism>
    <name type="scientific">Caenorhabditis elegans</name>
    <dbReference type="NCBI Taxonomy" id="6239"/>
    <lineage>
        <taxon>Eukaryota</taxon>
        <taxon>Metazoa</taxon>
        <taxon>Ecdysozoa</taxon>
        <taxon>Nematoda</taxon>
        <taxon>Chromadorea</taxon>
        <taxon>Rhabditida</taxon>
        <taxon>Rhabditina</taxon>
        <taxon>Rhabditomorpha</taxon>
        <taxon>Rhabditoidea</taxon>
        <taxon>Rhabditidae</taxon>
        <taxon>Peloderinae</taxon>
        <taxon>Caenorhabditis</taxon>
    </lineage>
</organism>
<comment type="catalytic activity">
    <reaction evidence="5">
        <text>L-seryl-[protein] + ATP = O-phospho-L-seryl-[protein] + ADP + H(+)</text>
        <dbReference type="Rhea" id="RHEA:17989"/>
        <dbReference type="Rhea" id="RHEA-COMP:9863"/>
        <dbReference type="Rhea" id="RHEA-COMP:11604"/>
        <dbReference type="ChEBI" id="CHEBI:15378"/>
        <dbReference type="ChEBI" id="CHEBI:29999"/>
        <dbReference type="ChEBI" id="CHEBI:30616"/>
        <dbReference type="ChEBI" id="CHEBI:83421"/>
        <dbReference type="ChEBI" id="CHEBI:456216"/>
        <dbReference type="EC" id="2.7.11.1"/>
    </reaction>
</comment>
<comment type="catalytic activity">
    <reaction evidence="5">
        <text>L-threonyl-[protein] + ATP = O-phospho-L-threonyl-[protein] + ADP + H(+)</text>
        <dbReference type="Rhea" id="RHEA:46608"/>
        <dbReference type="Rhea" id="RHEA-COMP:11060"/>
        <dbReference type="Rhea" id="RHEA-COMP:11605"/>
        <dbReference type="ChEBI" id="CHEBI:15378"/>
        <dbReference type="ChEBI" id="CHEBI:30013"/>
        <dbReference type="ChEBI" id="CHEBI:30616"/>
        <dbReference type="ChEBI" id="CHEBI:61977"/>
        <dbReference type="ChEBI" id="CHEBI:456216"/>
        <dbReference type="EC" id="2.7.11.1"/>
    </reaction>
</comment>
<comment type="cofactor">
    <cofactor evidence="5">
        <name>Mg(2+)</name>
        <dbReference type="ChEBI" id="CHEBI:18420"/>
    </cofactor>
</comment>
<comment type="tissue specificity">
    <text evidence="4">Expressed in tail neurons (PVQ and PHAL/PQR).</text>
</comment>
<comment type="disruption phenotype">
    <text evidence="4">RNAi-mediated knockdown causes no obvious phenotype.</text>
</comment>
<comment type="similarity">
    <text evidence="5">Belongs to the protein kinase superfamily. RIO-type Ser/Thr kinase family.</text>
</comment>
<dbReference type="EC" id="2.7.11.1" evidence="5"/>
<dbReference type="EMBL" id="Z22181">
    <property type="protein sequence ID" value="CAA80180.1"/>
    <property type="molecule type" value="Genomic_DNA"/>
</dbReference>
<dbReference type="PIR" id="S40935">
    <property type="entry name" value="S40935"/>
</dbReference>
<dbReference type="RefSeq" id="NP_499173.1">
    <property type="nucleotide sequence ID" value="NM_066772.9"/>
</dbReference>
<dbReference type="SMR" id="P34649"/>
<dbReference type="FunCoup" id="P34649">
    <property type="interactions" value="2150"/>
</dbReference>
<dbReference type="STRING" id="6239.ZK632.3.2"/>
<dbReference type="PaxDb" id="6239-ZK632.3.1"/>
<dbReference type="PeptideAtlas" id="P34649"/>
<dbReference type="EnsemblMetazoa" id="ZK632.3.1">
    <property type="protein sequence ID" value="ZK632.3.1"/>
    <property type="gene ID" value="WBGene00014012"/>
</dbReference>
<dbReference type="GeneID" id="176387"/>
<dbReference type="KEGG" id="cel:CELE_ZK632.3"/>
<dbReference type="UCSC" id="ZK632.3.1">
    <property type="organism name" value="c. elegans"/>
</dbReference>
<dbReference type="AGR" id="WB:WBGene00014012"/>
<dbReference type="CTD" id="176387"/>
<dbReference type="WormBase" id="ZK632.3">
    <property type="protein sequence ID" value="CE00420"/>
    <property type="gene ID" value="WBGene00014012"/>
    <property type="gene designation" value="riok-3"/>
</dbReference>
<dbReference type="eggNOG" id="KOG2269">
    <property type="taxonomic scope" value="Eukaryota"/>
</dbReference>
<dbReference type="GeneTree" id="ENSGT00940000157008"/>
<dbReference type="HOGENOM" id="CLU_018693_5_0_1"/>
<dbReference type="InParanoid" id="P34649"/>
<dbReference type="OMA" id="SKCPWGA"/>
<dbReference type="OrthoDB" id="205248at2759"/>
<dbReference type="PhylomeDB" id="P34649"/>
<dbReference type="PRO" id="PR:P34649"/>
<dbReference type="Proteomes" id="UP000001940">
    <property type="component" value="Chromosome III"/>
</dbReference>
<dbReference type="Bgee" id="WBGene00014012">
    <property type="expression patterns" value="Expressed in pharyngeal muscle cell (C elegans) and 4 other cell types or tissues"/>
</dbReference>
<dbReference type="GO" id="GO:0005829">
    <property type="term" value="C:cytosol"/>
    <property type="evidence" value="ECO:0000318"/>
    <property type="project" value="GO_Central"/>
</dbReference>
<dbReference type="GO" id="GO:0030688">
    <property type="term" value="C:preribosome, small subunit precursor"/>
    <property type="evidence" value="ECO:0000318"/>
    <property type="project" value="GO_Central"/>
</dbReference>
<dbReference type="GO" id="GO:0005524">
    <property type="term" value="F:ATP binding"/>
    <property type="evidence" value="ECO:0007669"/>
    <property type="project" value="UniProtKB-KW"/>
</dbReference>
<dbReference type="GO" id="GO:0046872">
    <property type="term" value="F:metal ion binding"/>
    <property type="evidence" value="ECO:0007669"/>
    <property type="project" value="UniProtKB-KW"/>
</dbReference>
<dbReference type="GO" id="GO:0106310">
    <property type="term" value="F:protein serine kinase activity"/>
    <property type="evidence" value="ECO:0007669"/>
    <property type="project" value="RHEA"/>
</dbReference>
<dbReference type="GO" id="GO:0004674">
    <property type="term" value="F:protein serine/threonine kinase activity"/>
    <property type="evidence" value="ECO:0000318"/>
    <property type="project" value="GO_Central"/>
</dbReference>
<dbReference type="GO" id="GO:0030490">
    <property type="term" value="P:maturation of SSU-rRNA"/>
    <property type="evidence" value="ECO:0000318"/>
    <property type="project" value="GO_Central"/>
</dbReference>
<dbReference type="CDD" id="cd05145">
    <property type="entry name" value="RIO1_like"/>
    <property type="match status" value="1"/>
</dbReference>
<dbReference type="Gene3D" id="3.30.200.20">
    <property type="entry name" value="Phosphorylase Kinase, domain 1"/>
    <property type="match status" value="1"/>
</dbReference>
<dbReference type="Gene3D" id="1.10.510.10">
    <property type="entry name" value="Transferase(Phosphotransferase) domain 1"/>
    <property type="match status" value="1"/>
</dbReference>
<dbReference type="InterPro" id="IPR011009">
    <property type="entry name" value="Kinase-like_dom_sf"/>
</dbReference>
<dbReference type="InterPro" id="IPR051272">
    <property type="entry name" value="RIO-type_Ser/Thr_kinase"/>
</dbReference>
<dbReference type="InterPro" id="IPR018934">
    <property type="entry name" value="RIO_dom"/>
</dbReference>
<dbReference type="InterPro" id="IPR000687">
    <property type="entry name" value="RIO_kinase"/>
</dbReference>
<dbReference type="InterPro" id="IPR018935">
    <property type="entry name" value="RIO_kinase_CS"/>
</dbReference>
<dbReference type="InterPro" id="IPR017406">
    <property type="entry name" value="Ser/Thr_kinase_Rio3"/>
</dbReference>
<dbReference type="PANTHER" id="PTHR45723">
    <property type="entry name" value="SERINE/THREONINE-PROTEIN KINASE RIO1"/>
    <property type="match status" value="1"/>
</dbReference>
<dbReference type="Pfam" id="PF01163">
    <property type="entry name" value="RIO1"/>
    <property type="match status" value="1"/>
</dbReference>
<dbReference type="PIRSF" id="PIRSF038146">
    <property type="entry name" value="Ser/Thr_PK_RIO3"/>
    <property type="match status" value="1"/>
</dbReference>
<dbReference type="SMART" id="SM00090">
    <property type="entry name" value="RIO"/>
    <property type="match status" value="1"/>
</dbReference>
<dbReference type="SUPFAM" id="SSF56112">
    <property type="entry name" value="Protein kinase-like (PK-like)"/>
    <property type="match status" value="1"/>
</dbReference>
<dbReference type="PROSITE" id="PS01245">
    <property type="entry name" value="RIO1"/>
    <property type="match status" value="1"/>
</dbReference>
<name>RIOK3_CAEEL</name>